<dbReference type="EC" id="2.3.3.13" evidence="1"/>
<dbReference type="EMBL" id="AL646052">
    <property type="protein sequence ID" value="CAD15779.1"/>
    <property type="molecule type" value="Genomic_DNA"/>
</dbReference>
<dbReference type="RefSeq" id="WP_011002004.1">
    <property type="nucleotide sequence ID" value="NC_003295.1"/>
</dbReference>
<dbReference type="SMR" id="Q8XXP1"/>
<dbReference type="STRING" id="267608.RSc2072"/>
<dbReference type="EnsemblBacteria" id="CAD15779">
    <property type="protein sequence ID" value="CAD15779"/>
    <property type="gene ID" value="RSc2072"/>
</dbReference>
<dbReference type="KEGG" id="rso:RSc2072"/>
<dbReference type="eggNOG" id="COG0119">
    <property type="taxonomic scope" value="Bacteria"/>
</dbReference>
<dbReference type="HOGENOM" id="CLU_022158_0_1_4"/>
<dbReference type="UniPathway" id="UPA00048">
    <property type="reaction ID" value="UER00070"/>
</dbReference>
<dbReference type="Proteomes" id="UP000001436">
    <property type="component" value="Chromosome"/>
</dbReference>
<dbReference type="GO" id="GO:0005829">
    <property type="term" value="C:cytosol"/>
    <property type="evidence" value="ECO:0007669"/>
    <property type="project" value="TreeGrafter"/>
</dbReference>
<dbReference type="GO" id="GO:0003852">
    <property type="term" value="F:2-isopropylmalate synthase activity"/>
    <property type="evidence" value="ECO:0007669"/>
    <property type="project" value="UniProtKB-UniRule"/>
</dbReference>
<dbReference type="GO" id="GO:0003985">
    <property type="term" value="F:acetyl-CoA C-acetyltransferase activity"/>
    <property type="evidence" value="ECO:0007669"/>
    <property type="project" value="UniProtKB-UniRule"/>
</dbReference>
<dbReference type="GO" id="GO:0030145">
    <property type="term" value="F:manganese ion binding"/>
    <property type="evidence" value="ECO:0007669"/>
    <property type="project" value="UniProtKB-UniRule"/>
</dbReference>
<dbReference type="GO" id="GO:0009098">
    <property type="term" value="P:L-leucine biosynthetic process"/>
    <property type="evidence" value="ECO:0007669"/>
    <property type="project" value="UniProtKB-UniRule"/>
</dbReference>
<dbReference type="CDD" id="cd07940">
    <property type="entry name" value="DRE_TIM_IPMS"/>
    <property type="match status" value="1"/>
</dbReference>
<dbReference type="FunFam" id="1.10.238.260:FF:000001">
    <property type="entry name" value="2-isopropylmalate synthase"/>
    <property type="match status" value="1"/>
</dbReference>
<dbReference type="FunFam" id="3.20.20.70:FF:000010">
    <property type="entry name" value="2-isopropylmalate synthase"/>
    <property type="match status" value="1"/>
</dbReference>
<dbReference type="FunFam" id="3.30.160.270:FF:000003">
    <property type="entry name" value="2-isopropylmalate synthase"/>
    <property type="match status" value="1"/>
</dbReference>
<dbReference type="Gene3D" id="1.10.238.260">
    <property type="match status" value="1"/>
</dbReference>
<dbReference type="Gene3D" id="3.30.160.270">
    <property type="match status" value="1"/>
</dbReference>
<dbReference type="Gene3D" id="3.20.20.70">
    <property type="entry name" value="Aldolase class I"/>
    <property type="match status" value="1"/>
</dbReference>
<dbReference type="HAMAP" id="MF_01025">
    <property type="entry name" value="LeuA_type1"/>
    <property type="match status" value="1"/>
</dbReference>
<dbReference type="InterPro" id="IPR050073">
    <property type="entry name" value="2-IPM_HCS-like"/>
</dbReference>
<dbReference type="InterPro" id="IPR013709">
    <property type="entry name" value="2-isopropylmalate_synth_dimer"/>
</dbReference>
<dbReference type="InterPro" id="IPR002034">
    <property type="entry name" value="AIPM/Hcit_synth_CS"/>
</dbReference>
<dbReference type="InterPro" id="IPR013785">
    <property type="entry name" value="Aldolase_TIM"/>
</dbReference>
<dbReference type="InterPro" id="IPR054691">
    <property type="entry name" value="LeuA/HCS_post-cat"/>
</dbReference>
<dbReference type="InterPro" id="IPR036230">
    <property type="entry name" value="LeuA_allosteric_dom_sf"/>
</dbReference>
<dbReference type="InterPro" id="IPR005671">
    <property type="entry name" value="LeuA_bact_synth"/>
</dbReference>
<dbReference type="InterPro" id="IPR000891">
    <property type="entry name" value="PYR_CT"/>
</dbReference>
<dbReference type="NCBIfam" id="TIGR00973">
    <property type="entry name" value="leuA_bact"/>
    <property type="match status" value="1"/>
</dbReference>
<dbReference type="NCBIfam" id="NF002086">
    <property type="entry name" value="PRK00915.1-3"/>
    <property type="match status" value="1"/>
</dbReference>
<dbReference type="NCBIfam" id="NF002087">
    <property type="entry name" value="PRK00915.1-4"/>
    <property type="match status" value="1"/>
</dbReference>
<dbReference type="PANTHER" id="PTHR10277:SF9">
    <property type="entry name" value="2-ISOPROPYLMALATE SYNTHASE 1, CHLOROPLASTIC-RELATED"/>
    <property type="match status" value="1"/>
</dbReference>
<dbReference type="PANTHER" id="PTHR10277">
    <property type="entry name" value="HOMOCITRATE SYNTHASE-RELATED"/>
    <property type="match status" value="1"/>
</dbReference>
<dbReference type="Pfam" id="PF22617">
    <property type="entry name" value="HCS_D2"/>
    <property type="match status" value="1"/>
</dbReference>
<dbReference type="Pfam" id="PF00682">
    <property type="entry name" value="HMGL-like"/>
    <property type="match status" value="1"/>
</dbReference>
<dbReference type="Pfam" id="PF08502">
    <property type="entry name" value="LeuA_dimer"/>
    <property type="match status" value="1"/>
</dbReference>
<dbReference type="SMART" id="SM00917">
    <property type="entry name" value="LeuA_dimer"/>
    <property type="match status" value="1"/>
</dbReference>
<dbReference type="SUPFAM" id="SSF110921">
    <property type="entry name" value="2-isopropylmalate synthase LeuA, allosteric (dimerisation) domain"/>
    <property type="match status" value="1"/>
</dbReference>
<dbReference type="SUPFAM" id="SSF51569">
    <property type="entry name" value="Aldolase"/>
    <property type="match status" value="1"/>
</dbReference>
<dbReference type="PROSITE" id="PS00815">
    <property type="entry name" value="AIPM_HOMOCIT_SYNTH_1"/>
    <property type="match status" value="1"/>
</dbReference>
<dbReference type="PROSITE" id="PS00816">
    <property type="entry name" value="AIPM_HOMOCIT_SYNTH_2"/>
    <property type="match status" value="1"/>
</dbReference>
<dbReference type="PROSITE" id="PS50991">
    <property type="entry name" value="PYR_CT"/>
    <property type="match status" value="1"/>
</dbReference>
<protein>
    <recommendedName>
        <fullName evidence="1">2-isopropylmalate synthase</fullName>
        <ecNumber evidence="1">2.3.3.13</ecNumber>
    </recommendedName>
    <alternativeName>
        <fullName evidence="1">Alpha-IPM synthase</fullName>
    </alternativeName>
    <alternativeName>
        <fullName evidence="1">Alpha-isopropylmalate synthase</fullName>
    </alternativeName>
</protein>
<comment type="function">
    <text evidence="1">Catalyzes the condensation of the acetyl group of acetyl-CoA with 3-methyl-2-oxobutanoate (2-ketoisovalerate) to form 3-carboxy-3-hydroxy-4-methylpentanoate (2-isopropylmalate).</text>
</comment>
<comment type="catalytic activity">
    <reaction evidence="1">
        <text>3-methyl-2-oxobutanoate + acetyl-CoA + H2O = (2S)-2-isopropylmalate + CoA + H(+)</text>
        <dbReference type="Rhea" id="RHEA:21524"/>
        <dbReference type="ChEBI" id="CHEBI:1178"/>
        <dbReference type="ChEBI" id="CHEBI:11851"/>
        <dbReference type="ChEBI" id="CHEBI:15377"/>
        <dbReference type="ChEBI" id="CHEBI:15378"/>
        <dbReference type="ChEBI" id="CHEBI:57287"/>
        <dbReference type="ChEBI" id="CHEBI:57288"/>
        <dbReference type="EC" id="2.3.3.13"/>
    </reaction>
</comment>
<comment type="cofactor">
    <cofactor evidence="1">
        <name>Mn(2+)</name>
        <dbReference type="ChEBI" id="CHEBI:29035"/>
    </cofactor>
</comment>
<comment type="pathway">
    <text evidence="1">Amino-acid biosynthesis; L-leucine biosynthesis; L-leucine from 3-methyl-2-oxobutanoate: step 1/4.</text>
</comment>
<comment type="subunit">
    <text evidence="1">Homodimer.</text>
</comment>
<comment type="subcellular location">
    <subcellularLocation>
        <location evidence="1">Cytoplasm</location>
    </subcellularLocation>
</comment>
<comment type="similarity">
    <text evidence="1 2">Belongs to the alpha-IPM synthase/homocitrate synthase family. LeuA type 1 subfamily.</text>
</comment>
<keyword id="KW-0028">Amino-acid biosynthesis</keyword>
<keyword id="KW-0100">Branched-chain amino acid biosynthesis</keyword>
<keyword id="KW-0963">Cytoplasm</keyword>
<keyword id="KW-0432">Leucine biosynthesis</keyword>
<keyword id="KW-0464">Manganese</keyword>
<keyword id="KW-0479">Metal-binding</keyword>
<keyword id="KW-1185">Reference proteome</keyword>
<keyword id="KW-0808">Transferase</keyword>
<gene>
    <name evidence="1" type="primary">leuA</name>
    <name type="synonym">leuA1</name>
    <name type="ordered locus">RSc2072</name>
    <name type="ORF">RS03637</name>
</gene>
<name>LEU1_RALN1</name>
<feature type="chain" id="PRO_0000140372" description="2-isopropylmalate synthase">
    <location>
        <begin position="1"/>
        <end position="513"/>
    </location>
</feature>
<feature type="domain" description="Pyruvate carboxyltransferase" evidence="1">
    <location>
        <begin position="5"/>
        <end position="268"/>
    </location>
</feature>
<feature type="region of interest" description="Regulatory domain" evidence="1">
    <location>
        <begin position="394"/>
        <end position="513"/>
    </location>
</feature>
<feature type="binding site" evidence="1">
    <location>
        <position position="14"/>
    </location>
    <ligand>
        <name>Mn(2+)</name>
        <dbReference type="ChEBI" id="CHEBI:29035"/>
    </ligand>
</feature>
<feature type="binding site" evidence="1">
    <location>
        <position position="202"/>
    </location>
    <ligand>
        <name>Mn(2+)</name>
        <dbReference type="ChEBI" id="CHEBI:29035"/>
    </ligand>
</feature>
<feature type="binding site" evidence="1">
    <location>
        <position position="204"/>
    </location>
    <ligand>
        <name>Mn(2+)</name>
        <dbReference type="ChEBI" id="CHEBI:29035"/>
    </ligand>
</feature>
<feature type="binding site" evidence="1">
    <location>
        <position position="239"/>
    </location>
    <ligand>
        <name>Mn(2+)</name>
        <dbReference type="ChEBI" id="CHEBI:29035"/>
    </ligand>
</feature>
<reference key="1">
    <citation type="journal article" date="2002" name="Nature">
        <title>Genome sequence of the plant pathogen Ralstonia solanacearum.</title>
        <authorList>
            <person name="Salanoubat M."/>
            <person name="Genin S."/>
            <person name="Artiguenave F."/>
            <person name="Gouzy J."/>
            <person name="Mangenot S."/>
            <person name="Arlat M."/>
            <person name="Billault A."/>
            <person name="Brottier P."/>
            <person name="Camus J.-C."/>
            <person name="Cattolico L."/>
            <person name="Chandler M."/>
            <person name="Choisne N."/>
            <person name="Claudel-Renard C."/>
            <person name="Cunnac S."/>
            <person name="Demange N."/>
            <person name="Gaspin C."/>
            <person name="Lavie M."/>
            <person name="Moisan A."/>
            <person name="Robert C."/>
            <person name="Saurin W."/>
            <person name="Schiex T."/>
            <person name="Siguier P."/>
            <person name="Thebault P."/>
            <person name="Whalen M."/>
            <person name="Wincker P."/>
            <person name="Levy M."/>
            <person name="Weissenbach J."/>
            <person name="Boucher C.A."/>
        </authorList>
    </citation>
    <scope>NUCLEOTIDE SEQUENCE [LARGE SCALE GENOMIC DNA]</scope>
    <source>
        <strain>ATCC BAA-1114 / GMI1000</strain>
    </source>
</reference>
<sequence length="513" mass="55573">MSDKLIIFDTTLRDGEQSPGASMTKEEKIRIAKQLERLKVDVIEAGFAASSNGDFEAIRAIAQSVKDSRICSLARANDRDISRAAEALKPAGQFRIHTFIATSALHMEKKLRMTPDQVYEQARLAVRFARQFTDDIEFSPEDGSRSDMDFLCRVLEGVIAEGATTINLPDTVGYAVPEGYAALIRSVRERIPNSDKAIWSVHCHNDLGMAVANSLAAVKLGGARQIECTINGLGERAGNTSLEEVVMAVKTRRDYFNLDVGVDTTQIVPASKLVSQITGFVVQPNKAVVGANAFAHASGIHQDGVLKARDTYEIMRAEDVGWTANKIVLGKLSGRNAFKQRLQELGIELDSEAELNAAFTRFKELADQKAEIFDEDIVAIVSNEAQHAEGEHFRFVSLSQRSETGERPHARIVFVADGKEVTGEAEGNGPVDATLNAIESKVASGAEQLLYSVNAITTGTQAQGEVTVRLSKSGRIVNGVGTDPDIVAASAKAYLAALNKLQDKSSEKLNPQI</sequence>
<accession>Q8XXP1</accession>
<proteinExistence type="inferred from homology"/>
<organism>
    <name type="scientific">Ralstonia nicotianae (strain ATCC BAA-1114 / GMI1000)</name>
    <name type="common">Ralstonia solanacearum</name>
    <dbReference type="NCBI Taxonomy" id="267608"/>
    <lineage>
        <taxon>Bacteria</taxon>
        <taxon>Pseudomonadati</taxon>
        <taxon>Pseudomonadota</taxon>
        <taxon>Betaproteobacteria</taxon>
        <taxon>Burkholderiales</taxon>
        <taxon>Burkholderiaceae</taxon>
        <taxon>Ralstonia</taxon>
        <taxon>Ralstonia solanacearum species complex</taxon>
    </lineage>
</organism>
<evidence type="ECO:0000255" key="1">
    <source>
        <dbReference type="HAMAP-Rule" id="MF_01025"/>
    </source>
</evidence>
<evidence type="ECO:0000305" key="2"/>